<reference key="1">
    <citation type="journal article" date="2004" name="Nat. Genet.">
        <title>Evidence in the Legionella pneumophila genome for exploitation of host cell functions and high genome plasticity.</title>
        <authorList>
            <person name="Cazalet C."/>
            <person name="Rusniok C."/>
            <person name="Brueggemann H."/>
            <person name="Zidane N."/>
            <person name="Magnier A."/>
            <person name="Ma L."/>
            <person name="Tichit M."/>
            <person name="Jarraud S."/>
            <person name="Bouchier C."/>
            <person name="Vandenesch F."/>
            <person name="Kunst F."/>
            <person name="Etienne J."/>
            <person name="Glaser P."/>
            <person name="Buchrieser C."/>
        </authorList>
    </citation>
    <scope>NUCLEOTIDE SEQUENCE [LARGE SCALE GENOMIC DNA]</scope>
    <source>
        <strain>Lens</strain>
    </source>
</reference>
<accession>Q5WYT2</accession>
<keyword id="KW-0963">Cytoplasm</keyword>
<keyword id="KW-0521">NADP</keyword>
<keyword id="KW-0560">Oxidoreductase</keyword>
<keyword id="KW-0671">Queuosine biosynthesis</keyword>
<sequence>MNKELEIIYQNIANQSELGQSSNYDDHYNPKRLYPIPRAPKRQEINLDPNSTTFYGFDCWNHYEVSWLNSKGKPVVAMAVISYDCHSPCIIESKSLKLYFNSLNNTTFPDVETVVQTISKDLSHCIGSEVAVNVYPLSEIASQTIYAAFDGICLDKLDIECSVYHVMPDFLSTSSELVEEVLYSDLLKSNCLVTNQPDWGSVQIIYKGKKINHEGLLKYLISFRNHNEFHEQCIERIFADIMRFCQPESLTVYGRYTRRGGLDINPIRSTEPCVFDGQNIRLIRQ</sequence>
<evidence type="ECO:0000255" key="1">
    <source>
        <dbReference type="HAMAP-Rule" id="MF_00817"/>
    </source>
</evidence>
<comment type="function">
    <text evidence="1">Catalyzes the NADPH-dependent reduction of 7-cyano-7-deazaguanine (preQ0) to 7-aminomethyl-7-deazaguanine (preQ1).</text>
</comment>
<comment type="catalytic activity">
    <reaction evidence="1">
        <text>7-aminomethyl-7-carbaguanine + 2 NADP(+) = 7-cyano-7-deazaguanine + 2 NADPH + 3 H(+)</text>
        <dbReference type="Rhea" id="RHEA:13409"/>
        <dbReference type="ChEBI" id="CHEBI:15378"/>
        <dbReference type="ChEBI" id="CHEBI:45075"/>
        <dbReference type="ChEBI" id="CHEBI:57783"/>
        <dbReference type="ChEBI" id="CHEBI:58349"/>
        <dbReference type="ChEBI" id="CHEBI:58703"/>
        <dbReference type="EC" id="1.7.1.13"/>
    </reaction>
</comment>
<comment type="pathway">
    <text evidence="1">tRNA modification; tRNA-queuosine biosynthesis.</text>
</comment>
<comment type="subunit">
    <text evidence="1">Homodimer.</text>
</comment>
<comment type="subcellular location">
    <subcellularLocation>
        <location evidence="1">Cytoplasm</location>
    </subcellularLocation>
</comment>
<comment type="similarity">
    <text evidence="1">Belongs to the GTP cyclohydrolase I family. QueF type 2 subfamily.</text>
</comment>
<organism>
    <name type="scientific">Legionella pneumophila (strain Lens)</name>
    <dbReference type="NCBI Taxonomy" id="297245"/>
    <lineage>
        <taxon>Bacteria</taxon>
        <taxon>Pseudomonadati</taxon>
        <taxon>Pseudomonadota</taxon>
        <taxon>Gammaproteobacteria</taxon>
        <taxon>Legionellales</taxon>
        <taxon>Legionellaceae</taxon>
        <taxon>Legionella</taxon>
    </lineage>
</organism>
<protein>
    <recommendedName>
        <fullName evidence="1">NADPH-dependent 7-cyano-7-deazaguanine reductase</fullName>
        <ecNumber evidence="1">1.7.1.13</ecNumber>
    </recommendedName>
    <alternativeName>
        <fullName evidence="1">7-cyano-7-carbaguanine reductase</fullName>
    </alternativeName>
    <alternativeName>
        <fullName evidence="1">NADPH-dependent nitrile oxidoreductase</fullName>
    </alternativeName>
    <alternativeName>
        <fullName evidence="1">PreQ(0) reductase</fullName>
    </alternativeName>
</protein>
<gene>
    <name evidence="1" type="primary">queF</name>
    <name type="ordered locus">lpl0654</name>
</gene>
<feature type="chain" id="PRO_0000163038" description="NADPH-dependent 7-cyano-7-deazaguanine reductase">
    <location>
        <begin position="1"/>
        <end position="285"/>
    </location>
</feature>
<feature type="active site" description="Thioimide intermediate" evidence="1">
    <location>
        <position position="191"/>
    </location>
</feature>
<feature type="active site" description="Proton donor" evidence="1">
    <location>
        <position position="198"/>
    </location>
</feature>
<feature type="binding site" evidence="1">
    <location>
        <begin position="91"/>
        <end position="93"/>
    </location>
    <ligand>
        <name>substrate</name>
    </ligand>
</feature>
<feature type="binding site" evidence="1">
    <location>
        <begin position="93"/>
        <end position="94"/>
    </location>
    <ligand>
        <name>NADPH</name>
        <dbReference type="ChEBI" id="CHEBI:57783"/>
    </ligand>
</feature>
<feature type="binding site" evidence="1">
    <location>
        <begin position="230"/>
        <end position="231"/>
    </location>
    <ligand>
        <name>substrate</name>
    </ligand>
</feature>
<feature type="binding site" evidence="1">
    <location>
        <begin position="259"/>
        <end position="260"/>
    </location>
    <ligand>
        <name>NADPH</name>
        <dbReference type="ChEBI" id="CHEBI:57783"/>
    </ligand>
</feature>
<proteinExistence type="inferred from homology"/>
<name>QUEF_LEGPL</name>
<dbReference type="EC" id="1.7.1.13" evidence="1"/>
<dbReference type="EMBL" id="CR628337">
    <property type="protein sequence ID" value="CAH14888.1"/>
    <property type="molecule type" value="Genomic_DNA"/>
</dbReference>
<dbReference type="RefSeq" id="WP_011214837.1">
    <property type="nucleotide sequence ID" value="NC_006369.1"/>
</dbReference>
<dbReference type="SMR" id="Q5WYT2"/>
<dbReference type="KEGG" id="lpf:lpl0654"/>
<dbReference type="LegioList" id="lpl0654"/>
<dbReference type="HOGENOM" id="CLU_054738_0_0_6"/>
<dbReference type="UniPathway" id="UPA00392"/>
<dbReference type="Proteomes" id="UP000002517">
    <property type="component" value="Chromosome"/>
</dbReference>
<dbReference type="GO" id="GO:0005737">
    <property type="term" value="C:cytoplasm"/>
    <property type="evidence" value="ECO:0007669"/>
    <property type="project" value="UniProtKB-SubCell"/>
</dbReference>
<dbReference type="GO" id="GO:0033739">
    <property type="term" value="F:preQ1 synthase activity"/>
    <property type="evidence" value="ECO:0007669"/>
    <property type="project" value="UniProtKB-UniRule"/>
</dbReference>
<dbReference type="GO" id="GO:0008616">
    <property type="term" value="P:queuosine biosynthetic process"/>
    <property type="evidence" value="ECO:0007669"/>
    <property type="project" value="UniProtKB-UniRule"/>
</dbReference>
<dbReference type="GO" id="GO:0006400">
    <property type="term" value="P:tRNA modification"/>
    <property type="evidence" value="ECO:0007669"/>
    <property type="project" value="UniProtKB-UniRule"/>
</dbReference>
<dbReference type="Gene3D" id="3.30.1130.10">
    <property type="match status" value="2"/>
</dbReference>
<dbReference type="HAMAP" id="MF_00817">
    <property type="entry name" value="QueF_type2"/>
    <property type="match status" value="1"/>
</dbReference>
<dbReference type="InterPro" id="IPR043133">
    <property type="entry name" value="GTP-CH-I_C/QueF"/>
</dbReference>
<dbReference type="InterPro" id="IPR050084">
    <property type="entry name" value="NADPH_dep_7-cyano-7-deazaG_red"/>
</dbReference>
<dbReference type="InterPro" id="IPR029500">
    <property type="entry name" value="QueF"/>
</dbReference>
<dbReference type="InterPro" id="IPR029139">
    <property type="entry name" value="QueF_N"/>
</dbReference>
<dbReference type="InterPro" id="IPR016428">
    <property type="entry name" value="QueF_type2"/>
</dbReference>
<dbReference type="NCBIfam" id="TIGR03138">
    <property type="entry name" value="QueF"/>
    <property type="match status" value="1"/>
</dbReference>
<dbReference type="PANTHER" id="PTHR34354">
    <property type="entry name" value="NADPH-DEPENDENT 7-CYANO-7-DEAZAGUANINE REDUCTASE"/>
    <property type="match status" value="1"/>
</dbReference>
<dbReference type="PANTHER" id="PTHR34354:SF1">
    <property type="entry name" value="NADPH-DEPENDENT 7-CYANO-7-DEAZAGUANINE REDUCTASE"/>
    <property type="match status" value="1"/>
</dbReference>
<dbReference type="Pfam" id="PF14489">
    <property type="entry name" value="QueF"/>
    <property type="match status" value="1"/>
</dbReference>
<dbReference type="Pfam" id="PF14819">
    <property type="entry name" value="QueF_N"/>
    <property type="match status" value="1"/>
</dbReference>
<dbReference type="PIRSF" id="PIRSF004750">
    <property type="entry name" value="Nitrile_oxidored_YqcD_prd"/>
    <property type="match status" value="1"/>
</dbReference>
<dbReference type="SUPFAM" id="SSF55620">
    <property type="entry name" value="Tetrahydrobiopterin biosynthesis enzymes-like"/>
    <property type="match status" value="1"/>
</dbReference>